<gene>
    <name evidence="1" type="primary">hemC</name>
    <name type="ordered locus">BMEI0176</name>
</gene>
<reference key="1">
    <citation type="journal article" date="2002" name="Proc. Natl. Acad. Sci. U.S.A.">
        <title>The genome sequence of the facultative intracellular pathogen Brucella melitensis.</title>
        <authorList>
            <person name="DelVecchio V.G."/>
            <person name="Kapatral V."/>
            <person name="Redkar R.J."/>
            <person name="Patra G."/>
            <person name="Mujer C."/>
            <person name="Los T."/>
            <person name="Ivanova N."/>
            <person name="Anderson I."/>
            <person name="Bhattacharyya A."/>
            <person name="Lykidis A."/>
            <person name="Reznik G."/>
            <person name="Jablonski L."/>
            <person name="Larsen N."/>
            <person name="D'Souza M."/>
            <person name="Bernal A."/>
            <person name="Mazur M."/>
            <person name="Goltsman E."/>
            <person name="Selkov E."/>
            <person name="Elzer P.H."/>
            <person name="Hagius S."/>
            <person name="O'Callaghan D."/>
            <person name="Letesson J.-J."/>
            <person name="Haselkorn R."/>
            <person name="Kyrpides N.C."/>
            <person name="Overbeek R."/>
        </authorList>
    </citation>
    <scope>NUCLEOTIDE SEQUENCE [LARGE SCALE GENOMIC DNA]</scope>
    <source>
        <strain>ATCC 23456 / CCUG 17765 / NCTC 10094 / 16M</strain>
    </source>
</reference>
<proteinExistence type="inferred from homology"/>
<dbReference type="EC" id="2.5.1.61" evidence="1"/>
<dbReference type="EMBL" id="AE008917">
    <property type="protein sequence ID" value="AAL51358.1"/>
    <property type="status" value="ALT_INIT"/>
    <property type="molecule type" value="Genomic_DNA"/>
</dbReference>
<dbReference type="PIR" id="AC3274">
    <property type="entry name" value="AC3274"/>
</dbReference>
<dbReference type="RefSeq" id="WP_002964957.1">
    <property type="nucleotide sequence ID" value="NZ_GG703778.1"/>
</dbReference>
<dbReference type="SMR" id="Q8YJB0"/>
<dbReference type="GeneID" id="93017780"/>
<dbReference type="KEGG" id="bme:BMEI0176"/>
<dbReference type="eggNOG" id="COG0181">
    <property type="taxonomic scope" value="Bacteria"/>
</dbReference>
<dbReference type="UniPathway" id="UPA00251">
    <property type="reaction ID" value="UER00319"/>
</dbReference>
<dbReference type="Proteomes" id="UP000000419">
    <property type="component" value="Chromosome I"/>
</dbReference>
<dbReference type="GO" id="GO:0005737">
    <property type="term" value="C:cytoplasm"/>
    <property type="evidence" value="ECO:0007669"/>
    <property type="project" value="TreeGrafter"/>
</dbReference>
<dbReference type="GO" id="GO:0004418">
    <property type="term" value="F:hydroxymethylbilane synthase activity"/>
    <property type="evidence" value="ECO:0007669"/>
    <property type="project" value="UniProtKB-UniRule"/>
</dbReference>
<dbReference type="GO" id="GO:0006782">
    <property type="term" value="P:protoporphyrinogen IX biosynthetic process"/>
    <property type="evidence" value="ECO:0007669"/>
    <property type="project" value="UniProtKB-UniRule"/>
</dbReference>
<dbReference type="FunFam" id="3.40.190.10:FF:000004">
    <property type="entry name" value="Porphobilinogen deaminase"/>
    <property type="match status" value="1"/>
</dbReference>
<dbReference type="FunFam" id="3.40.190.10:FF:000005">
    <property type="entry name" value="Porphobilinogen deaminase"/>
    <property type="match status" value="1"/>
</dbReference>
<dbReference type="Gene3D" id="3.40.190.10">
    <property type="entry name" value="Periplasmic binding protein-like II"/>
    <property type="match status" value="2"/>
</dbReference>
<dbReference type="Gene3D" id="3.30.160.40">
    <property type="entry name" value="Porphobilinogen deaminase, C-terminal domain"/>
    <property type="match status" value="1"/>
</dbReference>
<dbReference type="HAMAP" id="MF_00260">
    <property type="entry name" value="Porphobil_deam"/>
    <property type="match status" value="1"/>
</dbReference>
<dbReference type="InterPro" id="IPR000860">
    <property type="entry name" value="HemC"/>
</dbReference>
<dbReference type="InterPro" id="IPR022419">
    <property type="entry name" value="Porphobilin_deaminase_cofac_BS"/>
</dbReference>
<dbReference type="InterPro" id="IPR022417">
    <property type="entry name" value="Porphobilin_deaminase_N"/>
</dbReference>
<dbReference type="InterPro" id="IPR022418">
    <property type="entry name" value="Porphobilinogen_deaminase_C"/>
</dbReference>
<dbReference type="InterPro" id="IPR036803">
    <property type="entry name" value="Porphobilinogen_deaminase_C_sf"/>
</dbReference>
<dbReference type="NCBIfam" id="TIGR00212">
    <property type="entry name" value="hemC"/>
    <property type="match status" value="1"/>
</dbReference>
<dbReference type="PANTHER" id="PTHR11557">
    <property type="entry name" value="PORPHOBILINOGEN DEAMINASE"/>
    <property type="match status" value="1"/>
</dbReference>
<dbReference type="PANTHER" id="PTHR11557:SF0">
    <property type="entry name" value="PORPHOBILINOGEN DEAMINASE"/>
    <property type="match status" value="1"/>
</dbReference>
<dbReference type="Pfam" id="PF01379">
    <property type="entry name" value="Porphobil_deam"/>
    <property type="match status" value="1"/>
</dbReference>
<dbReference type="Pfam" id="PF03900">
    <property type="entry name" value="Porphobil_deamC"/>
    <property type="match status" value="1"/>
</dbReference>
<dbReference type="PIRSF" id="PIRSF001438">
    <property type="entry name" value="4pyrrol_synth_OHMeBilane_synth"/>
    <property type="match status" value="1"/>
</dbReference>
<dbReference type="PRINTS" id="PR00151">
    <property type="entry name" value="PORPHBDMNASE"/>
</dbReference>
<dbReference type="SUPFAM" id="SSF53850">
    <property type="entry name" value="Periplasmic binding protein-like II"/>
    <property type="match status" value="1"/>
</dbReference>
<dbReference type="SUPFAM" id="SSF54782">
    <property type="entry name" value="Porphobilinogen deaminase (hydroxymethylbilane synthase), C-terminal domain"/>
    <property type="match status" value="1"/>
</dbReference>
<dbReference type="PROSITE" id="PS00533">
    <property type="entry name" value="PORPHOBILINOGEN_DEAM"/>
    <property type="match status" value="1"/>
</dbReference>
<protein>
    <recommendedName>
        <fullName evidence="1">Porphobilinogen deaminase</fullName>
        <shortName evidence="1">PBG</shortName>
        <ecNumber evidence="1">2.5.1.61</ecNumber>
    </recommendedName>
    <alternativeName>
        <fullName evidence="1">Hydroxymethylbilane synthase</fullName>
        <shortName evidence="1">HMBS</shortName>
    </alternativeName>
    <alternativeName>
        <fullName evidence="1">Pre-uroporphyrinogen synthase</fullName>
    </alternativeName>
</protein>
<sequence>MQTASFKNGTLKIGTRGSKLALAQAYLTRRLLQEAHGLPEDAIEILPMSTAGDRIQDRPLSEVGGKGLFTEEIEQALKDGRIDIAVHSTKDMPTALPEGLHLSVFLEREDPRDAFIGRSARRFMDLPQGATVGSSSLRRQALIRRLRPDIEVVMYRGNVDTRLRKLDAGEVDGTFLACAGLRRLGLADVITDVLDPSVFPPAPGQGAIGIESRIGDERIDVLLAPLAHRETQIALACERAFLGALDGSCRTPIAGLATVEGDRLSFRGMILTPDGRQAHEVTAEGVVSDAAALGTDAANRVRAMAGPHFFDGWQ</sequence>
<keyword id="KW-0627">Porphyrin biosynthesis</keyword>
<keyword id="KW-0808">Transferase</keyword>
<accession>Q8YJB0</accession>
<organism>
    <name type="scientific">Brucella melitensis biotype 1 (strain ATCC 23456 / CCUG 17765 / NCTC 10094 / 16M)</name>
    <dbReference type="NCBI Taxonomy" id="224914"/>
    <lineage>
        <taxon>Bacteria</taxon>
        <taxon>Pseudomonadati</taxon>
        <taxon>Pseudomonadota</taxon>
        <taxon>Alphaproteobacteria</taxon>
        <taxon>Hyphomicrobiales</taxon>
        <taxon>Brucellaceae</taxon>
        <taxon>Brucella/Ochrobactrum group</taxon>
        <taxon>Brucella</taxon>
    </lineage>
</organism>
<comment type="function">
    <text evidence="1">Tetrapolymerization of the monopyrrole PBG into the hydroxymethylbilane pre-uroporphyrinogen in several discrete steps.</text>
</comment>
<comment type="catalytic activity">
    <reaction evidence="1">
        <text>4 porphobilinogen + H2O = hydroxymethylbilane + 4 NH4(+)</text>
        <dbReference type="Rhea" id="RHEA:13185"/>
        <dbReference type="ChEBI" id="CHEBI:15377"/>
        <dbReference type="ChEBI" id="CHEBI:28938"/>
        <dbReference type="ChEBI" id="CHEBI:57845"/>
        <dbReference type="ChEBI" id="CHEBI:58126"/>
        <dbReference type="EC" id="2.5.1.61"/>
    </reaction>
</comment>
<comment type="cofactor">
    <cofactor evidence="1">
        <name>dipyrromethane</name>
        <dbReference type="ChEBI" id="CHEBI:60342"/>
    </cofactor>
    <text evidence="1">Binds 1 dipyrromethane group covalently.</text>
</comment>
<comment type="pathway">
    <text evidence="1">Porphyrin-containing compound metabolism; protoporphyrin-IX biosynthesis; coproporphyrinogen-III from 5-aminolevulinate: step 2/4.</text>
</comment>
<comment type="subunit">
    <text evidence="1">Monomer.</text>
</comment>
<comment type="miscellaneous">
    <text evidence="1">The porphobilinogen subunits are added to the dipyrromethane group.</text>
</comment>
<comment type="similarity">
    <text evidence="1">Belongs to the HMBS family.</text>
</comment>
<comment type="sequence caution" evidence="2">
    <conflict type="erroneous initiation">
        <sequence resource="EMBL-CDS" id="AAL51358"/>
    </conflict>
</comment>
<name>HEM3_BRUME</name>
<feature type="chain" id="PRO_0000142914" description="Porphobilinogen deaminase">
    <location>
        <begin position="1"/>
        <end position="314"/>
    </location>
</feature>
<feature type="modified residue" description="S-(dipyrrolylmethanemethyl)cysteine" evidence="1">
    <location>
        <position position="249"/>
    </location>
</feature>
<evidence type="ECO:0000255" key="1">
    <source>
        <dbReference type="HAMAP-Rule" id="MF_00260"/>
    </source>
</evidence>
<evidence type="ECO:0000305" key="2"/>